<gene>
    <name evidence="1" type="primary">pyrC</name>
    <name type="ordered locus">UTI89_C1187</name>
</gene>
<keyword id="KW-0378">Hydrolase</keyword>
<keyword id="KW-0479">Metal-binding</keyword>
<keyword id="KW-0665">Pyrimidine biosynthesis</keyword>
<keyword id="KW-0862">Zinc</keyword>
<protein>
    <recommendedName>
        <fullName evidence="1">Dihydroorotase</fullName>
        <shortName evidence="1">DHOase</shortName>
        <ecNumber evidence="1">3.5.2.3</ecNumber>
    </recommendedName>
</protein>
<reference key="1">
    <citation type="journal article" date="2006" name="Proc. Natl. Acad. Sci. U.S.A.">
        <title>Identification of genes subject to positive selection in uropathogenic strains of Escherichia coli: a comparative genomics approach.</title>
        <authorList>
            <person name="Chen S.L."/>
            <person name="Hung C.-S."/>
            <person name="Xu J."/>
            <person name="Reigstad C.S."/>
            <person name="Magrini V."/>
            <person name="Sabo A."/>
            <person name="Blasiar D."/>
            <person name="Bieri T."/>
            <person name="Meyer R.R."/>
            <person name="Ozersky P."/>
            <person name="Armstrong J.R."/>
            <person name="Fulton R.S."/>
            <person name="Latreille J.P."/>
            <person name="Spieth J."/>
            <person name="Hooton T.M."/>
            <person name="Mardis E.R."/>
            <person name="Hultgren S.J."/>
            <person name="Gordon J.I."/>
        </authorList>
    </citation>
    <scope>NUCLEOTIDE SEQUENCE [LARGE SCALE GENOMIC DNA]</scope>
    <source>
        <strain>UTI89 / UPEC</strain>
    </source>
</reference>
<comment type="function">
    <text evidence="1">Catalyzes the reversible cyclization of carbamoyl aspartate to dihydroorotate.</text>
</comment>
<comment type="catalytic activity">
    <reaction evidence="1">
        <text>(S)-dihydroorotate + H2O = N-carbamoyl-L-aspartate + H(+)</text>
        <dbReference type="Rhea" id="RHEA:24296"/>
        <dbReference type="ChEBI" id="CHEBI:15377"/>
        <dbReference type="ChEBI" id="CHEBI:15378"/>
        <dbReference type="ChEBI" id="CHEBI:30864"/>
        <dbReference type="ChEBI" id="CHEBI:32814"/>
        <dbReference type="EC" id="3.5.2.3"/>
    </reaction>
</comment>
<comment type="cofactor">
    <cofactor evidence="1">
        <name>Zn(2+)</name>
        <dbReference type="ChEBI" id="CHEBI:29105"/>
    </cofactor>
    <text evidence="1">Binds 2 Zn(2+) ions per subunit.</text>
</comment>
<comment type="pathway">
    <text evidence="1">Pyrimidine metabolism; UMP biosynthesis via de novo pathway; (S)-dihydroorotate from bicarbonate: step 3/3.</text>
</comment>
<comment type="subunit">
    <text evidence="1">Homodimer.</text>
</comment>
<comment type="similarity">
    <text evidence="1">Belongs to the metallo-dependent hydrolases superfamily. DHOase family. Class II DHOase subfamily.</text>
</comment>
<dbReference type="EC" id="3.5.2.3" evidence="1"/>
<dbReference type="EMBL" id="CP000243">
    <property type="protein sequence ID" value="ABE06669.1"/>
    <property type="molecule type" value="Genomic_DNA"/>
</dbReference>
<dbReference type="RefSeq" id="WP_000126545.1">
    <property type="nucleotide sequence ID" value="NZ_CP064825.1"/>
</dbReference>
<dbReference type="SMR" id="Q1RD95"/>
<dbReference type="MEROPS" id="M38.A02"/>
<dbReference type="KEGG" id="eci:UTI89_C1187"/>
<dbReference type="HOGENOM" id="CLU_041558_1_0_6"/>
<dbReference type="UniPathway" id="UPA00070">
    <property type="reaction ID" value="UER00117"/>
</dbReference>
<dbReference type="Proteomes" id="UP000001952">
    <property type="component" value="Chromosome"/>
</dbReference>
<dbReference type="GO" id="GO:0005829">
    <property type="term" value="C:cytosol"/>
    <property type="evidence" value="ECO:0007669"/>
    <property type="project" value="TreeGrafter"/>
</dbReference>
<dbReference type="GO" id="GO:0004151">
    <property type="term" value="F:dihydroorotase activity"/>
    <property type="evidence" value="ECO:0007669"/>
    <property type="project" value="UniProtKB-UniRule"/>
</dbReference>
<dbReference type="GO" id="GO:0008270">
    <property type="term" value="F:zinc ion binding"/>
    <property type="evidence" value="ECO:0007669"/>
    <property type="project" value="UniProtKB-UniRule"/>
</dbReference>
<dbReference type="GO" id="GO:0006207">
    <property type="term" value="P:'de novo' pyrimidine nucleobase biosynthetic process"/>
    <property type="evidence" value="ECO:0007669"/>
    <property type="project" value="TreeGrafter"/>
</dbReference>
<dbReference type="GO" id="GO:0044205">
    <property type="term" value="P:'de novo' UMP biosynthetic process"/>
    <property type="evidence" value="ECO:0007669"/>
    <property type="project" value="UniProtKB-UniRule"/>
</dbReference>
<dbReference type="CDD" id="cd01294">
    <property type="entry name" value="DHOase"/>
    <property type="match status" value="1"/>
</dbReference>
<dbReference type="FunFam" id="3.20.20.140:FF:000006">
    <property type="entry name" value="Dihydroorotase"/>
    <property type="match status" value="1"/>
</dbReference>
<dbReference type="Gene3D" id="3.20.20.140">
    <property type="entry name" value="Metal-dependent hydrolases"/>
    <property type="match status" value="1"/>
</dbReference>
<dbReference type="HAMAP" id="MF_00219">
    <property type="entry name" value="PyrC_classII"/>
    <property type="match status" value="1"/>
</dbReference>
<dbReference type="InterPro" id="IPR006680">
    <property type="entry name" value="Amidohydro-rel"/>
</dbReference>
<dbReference type="InterPro" id="IPR004721">
    <property type="entry name" value="DHOdimr"/>
</dbReference>
<dbReference type="InterPro" id="IPR002195">
    <property type="entry name" value="Dihydroorotase_CS"/>
</dbReference>
<dbReference type="InterPro" id="IPR032466">
    <property type="entry name" value="Metal_Hydrolase"/>
</dbReference>
<dbReference type="NCBIfam" id="TIGR00856">
    <property type="entry name" value="pyrC_dimer"/>
    <property type="match status" value="1"/>
</dbReference>
<dbReference type="PANTHER" id="PTHR43137">
    <property type="entry name" value="DIHYDROOROTASE"/>
    <property type="match status" value="1"/>
</dbReference>
<dbReference type="PANTHER" id="PTHR43137:SF1">
    <property type="entry name" value="DIHYDROOROTASE"/>
    <property type="match status" value="1"/>
</dbReference>
<dbReference type="Pfam" id="PF01979">
    <property type="entry name" value="Amidohydro_1"/>
    <property type="match status" value="1"/>
</dbReference>
<dbReference type="PIRSF" id="PIRSF001237">
    <property type="entry name" value="DHOdimr"/>
    <property type="match status" value="1"/>
</dbReference>
<dbReference type="SUPFAM" id="SSF51556">
    <property type="entry name" value="Metallo-dependent hydrolases"/>
    <property type="match status" value="1"/>
</dbReference>
<dbReference type="PROSITE" id="PS00482">
    <property type="entry name" value="DIHYDROOROTASE_1"/>
    <property type="match status" value="1"/>
</dbReference>
<dbReference type="PROSITE" id="PS00483">
    <property type="entry name" value="DIHYDROOROTASE_2"/>
    <property type="match status" value="1"/>
</dbReference>
<evidence type="ECO:0000255" key="1">
    <source>
        <dbReference type="HAMAP-Rule" id="MF_00219"/>
    </source>
</evidence>
<sequence length="348" mass="38839">MTAPSQVLKIRRPDDWHLHLRDGDMLKTVVPYTSEIYGRAIVMPNLAPPVTTVEAAVAYRQRILDAVPAGHDFTPLMTCYLTDSLDPNELERGFNEGVFTAAKLYPANATTNSSHGVTSVDAIMPVLERMEKIGMPLLVHGEVTHADIDIFDREARFIESVMEPLRQRLTALKVVFEHITTKDAADYVRDGNERLAATITPQHLMFNRNHMLVGGVRPHLYCLPILKRNIHQQALRELVASGFNRVFLGTDSAPHARHRKESSCGCAGCFNAPTALGSYATVFEEMNALQYFEAFCSVNGPQFYGLPVNDTFIELVREEQQVAESIALTDDTLVPFLAGETVRWSVKQ</sequence>
<proteinExistence type="inferred from homology"/>
<feature type="chain" id="PRO_1000024011" description="Dihydroorotase">
    <location>
        <begin position="1"/>
        <end position="348"/>
    </location>
</feature>
<feature type="active site" evidence="1">
    <location>
        <position position="251"/>
    </location>
</feature>
<feature type="binding site" evidence="1">
    <location>
        <position position="17"/>
    </location>
    <ligand>
        <name>Zn(2+)</name>
        <dbReference type="ChEBI" id="CHEBI:29105"/>
        <label>1</label>
    </ligand>
</feature>
<feature type="binding site" evidence="1">
    <location>
        <begin position="19"/>
        <end position="21"/>
    </location>
    <ligand>
        <name>substrate</name>
    </ligand>
</feature>
<feature type="binding site" evidence="1">
    <location>
        <position position="19"/>
    </location>
    <ligand>
        <name>Zn(2+)</name>
        <dbReference type="ChEBI" id="CHEBI:29105"/>
        <label>1</label>
    </ligand>
</feature>
<feature type="binding site" evidence="1">
    <location>
        <position position="45"/>
    </location>
    <ligand>
        <name>substrate</name>
    </ligand>
</feature>
<feature type="binding site" description="via carbamate group" evidence="1">
    <location>
        <position position="103"/>
    </location>
    <ligand>
        <name>Zn(2+)</name>
        <dbReference type="ChEBI" id="CHEBI:29105"/>
        <label>1</label>
    </ligand>
</feature>
<feature type="binding site" description="via carbamate group" evidence="1">
    <location>
        <position position="103"/>
    </location>
    <ligand>
        <name>Zn(2+)</name>
        <dbReference type="ChEBI" id="CHEBI:29105"/>
        <label>2</label>
    </ligand>
</feature>
<feature type="binding site" evidence="1">
    <location>
        <position position="140"/>
    </location>
    <ligand>
        <name>substrate</name>
    </ligand>
</feature>
<feature type="binding site" evidence="1">
    <location>
        <position position="140"/>
    </location>
    <ligand>
        <name>Zn(2+)</name>
        <dbReference type="ChEBI" id="CHEBI:29105"/>
        <label>2</label>
    </ligand>
</feature>
<feature type="binding site" evidence="1">
    <location>
        <position position="178"/>
    </location>
    <ligand>
        <name>Zn(2+)</name>
        <dbReference type="ChEBI" id="CHEBI:29105"/>
        <label>2</label>
    </ligand>
</feature>
<feature type="binding site" evidence="1">
    <location>
        <position position="223"/>
    </location>
    <ligand>
        <name>substrate</name>
    </ligand>
</feature>
<feature type="binding site" evidence="1">
    <location>
        <position position="251"/>
    </location>
    <ligand>
        <name>Zn(2+)</name>
        <dbReference type="ChEBI" id="CHEBI:29105"/>
        <label>1</label>
    </ligand>
</feature>
<feature type="binding site" evidence="1">
    <location>
        <position position="255"/>
    </location>
    <ligand>
        <name>substrate</name>
    </ligand>
</feature>
<feature type="binding site" evidence="1">
    <location>
        <position position="267"/>
    </location>
    <ligand>
        <name>substrate</name>
    </ligand>
</feature>
<feature type="modified residue" description="N6-carboxylysine" evidence="1">
    <location>
        <position position="103"/>
    </location>
</feature>
<accession>Q1RD95</accession>
<organism>
    <name type="scientific">Escherichia coli (strain UTI89 / UPEC)</name>
    <dbReference type="NCBI Taxonomy" id="364106"/>
    <lineage>
        <taxon>Bacteria</taxon>
        <taxon>Pseudomonadati</taxon>
        <taxon>Pseudomonadota</taxon>
        <taxon>Gammaproteobacteria</taxon>
        <taxon>Enterobacterales</taxon>
        <taxon>Enterobacteriaceae</taxon>
        <taxon>Escherichia</taxon>
    </lineage>
</organism>
<name>PYRC_ECOUT</name>